<evidence type="ECO:0000255" key="1">
    <source>
        <dbReference type="HAMAP-Rule" id="MF_01659"/>
    </source>
</evidence>
<comment type="function">
    <text evidence="1">Catalyzes the thiamine diphosphate-dependent decarboxylation of 2-oxoglutarate and the subsequent addition of the resulting succinic semialdehyde-thiamine pyrophosphate anion to isochorismate to yield 2-succinyl-5-enolpyruvyl-6-hydroxy-3-cyclohexene-1-carboxylate (SEPHCHC).</text>
</comment>
<comment type="catalytic activity">
    <reaction evidence="1">
        <text>isochorismate + 2-oxoglutarate + H(+) = 5-enolpyruvoyl-6-hydroxy-2-succinyl-cyclohex-3-ene-1-carboxylate + CO2</text>
        <dbReference type="Rhea" id="RHEA:25593"/>
        <dbReference type="ChEBI" id="CHEBI:15378"/>
        <dbReference type="ChEBI" id="CHEBI:16526"/>
        <dbReference type="ChEBI" id="CHEBI:16810"/>
        <dbReference type="ChEBI" id="CHEBI:29780"/>
        <dbReference type="ChEBI" id="CHEBI:58818"/>
        <dbReference type="EC" id="2.2.1.9"/>
    </reaction>
</comment>
<comment type="cofactor">
    <cofactor evidence="1">
        <name>Mg(2+)</name>
        <dbReference type="ChEBI" id="CHEBI:18420"/>
    </cofactor>
    <cofactor evidence="1">
        <name>Mn(2+)</name>
        <dbReference type="ChEBI" id="CHEBI:29035"/>
    </cofactor>
</comment>
<comment type="cofactor">
    <cofactor evidence="1">
        <name>thiamine diphosphate</name>
        <dbReference type="ChEBI" id="CHEBI:58937"/>
    </cofactor>
    <text evidence="1">Binds 1 thiamine pyrophosphate per subunit.</text>
</comment>
<comment type="pathway">
    <text evidence="1">Quinol/quinone metabolism; 1,4-dihydroxy-2-naphthoate biosynthesis; 1,4-dihydroxy-2-naphthoate from chorismate: step 2/7.</text>
</comment>
<comment type="pathway">
    <text evidence="1">Quinol/quinone metabolism; menaquinone biosynthesis.</text>
</comment>
<comment type="subunit">
    <text evidence="1">Homodimer.</text>
</comment>
<comment type="similarity">
    <text evidence="1">Belongs to the TPP enzyme family. MenD subfamily.</text>
</comment>
<gene>
    <name evidence="1" type="primary">menD</name>
    <name type="ordered locus">VC0395_A1561</name>
    <name type="ordered locus">VC395_2090</name>
</gene>
<name>MEND_VIBC3</name>
<keyword id="KW-0460">Magnesium</keyword>
<keyword id="KW-0464">Manganese</keyword>
<keyword id="KW-0474">Menaquinone biosynthesis</keyword>
<keyword id="KW-0479">Metal-binding</keyword>
<keyword id="KW-0786">Thiamine pyrophosphate</keyword>
<keyword id="KW-0808">Transferase</keyword>
<proteinExistence type="inferred from homology"/>
<organism>
    <name type="scientific">Vibrio cholerae serotype O1 (strain ATCC 39541 / Classical Ogawa 395 / O395)</name>
    <dbReference type="NCBI Taxonomy" id="345073"/>
    <lineage>
        <taxon>Bacteria</taxon>
        <taxon>Pseudomonadati</taxon>
        <taxon>Pseudomonadota</taxon>
        <taxon>Gammaproteobacteria</taxon>
        <taxon>Vibrionales</taxon>
        <taxon>Vibrionaceae</taxon>
        <taxon>Vibrio</taxon>
    </lineage>
</organism>
<dbReference type="EC" id="2.2.1.9" evidence="1"/>
<dbReference type="EMBL" id="CP000627">
    <property type="protein sequence ID" value="ABQ21598.1"/>
    <property type="molecule type" value="Genomic_DNA"/>
</dbReference>
<dbReference type="EMBL" id="CP001235">
    <property type="protein sequence ID" value="ACP10082.1"/>
    <property type="molecule type" value="Genomic_DNA"/>
</dbReference>
<dbReference type="RefSeq" id="WP_001078087.1">
    <property type="nucleotide sequence ID" value="NZ_JAACZH010000001.1"/>
</dbReference>
<dbReference type="SMR" id="A5F6T1"/>
<dbReference type="KEGG" id="vco:VC0395_A1561"/>
<dbReference type="KEGG" id="vcr:VC395_2090"/>
<dbReference type="PATRIC" id="fig|345073.21.peg.2018"/>
<dbReference type="eggNOG" id="COG1165">
    <property type="taxonomic scope" value="Bacteria"/>
</dbReference>
<dbReference type="HOGENOM" id="CLU_006051_3_0_6"/>
<dbReference type="OrthoDB" id="9791859at2"/>
<dbReference type="UniPathway" id="UPA00079"/>
<dbReference type="UniPathway" id="UPA01057">
    <property type="reaction ID" value="UER00164"/>
</dbReference>
<dbReference type="Proteomes" id="UP000000249">
    <property type="component" value="Chromosome 2"/>
</dbReference>
<dbReference type="GO" id="GO:0070204">
    <property type="term" value="F:2-succinyl-5-enolpyruvyl-6-hydroxy-3-cyclohexene-1-carboxylic-acid synthase activity"/>
    <property type="evidence" value="ECO:0007669"/>
    <property type="project" value="UniProtKB-UniRule"/>
</dbReference>
<dbReference type="GO" id="GO:0000287">
    <property type="term" value="F:magnesium ion binding"/>
    <property type="evidence" value="ECO:0007669"/>
    <property type="project" value="UniProtKB-UniRule"/>
</dbReference>
<dbReference type="GO" id="GO:0030145">
    <property type="term" value="F:manganese ion binding"/>
    <property type="evidence" value="ECO:0007669"/>
    <property type="project" value="UniProtKB-UniRule"/>
</dbReference>
<dbReference type="GO" id="GO:0030976">
    <property type="term" value="F:thiamine pyrophosphate binding"/>
    <property type="evidence" value="ECO:0007669"/>
    <property type="project" value="UniProtKB-UniRule"/>
</dbReference>
<dbReference type="GO" id="GO:0009234">
    <property type="term" value="P:menaquinone biosynthetic process"/>
    <property type="evidence" value="ECO:0007669"/>
    <property type="project" value="UniProtKB-UniRule"/>
</dbReference>
<dbReference type="CDD" id="cd07037">
    <property type="entry name" value="TPP_PYR_MenD"/>
    <property type="match status" value="1"/>
</dbReference>
<dbReference type="CDD" id="cd02009">
    <property type="entry name" value="TPP_SHCHC_synthase"/>
    <property type="match status" value="1"/>
</dbReference>
<dbReference type="FunFam" id="3.40.50.970:FF:000103">
    <property type="entry name" value="2-succinyl-5-enolpyruvyl-6-hydroxy-3-cyclohexene-1-carboxylate synthase"/>
    <property type="match status" value="1"/>
</dbReference>
<dbReference type="Gene3D" id="3.40.50.970">
    <property type="match status" value="2"/>
</dbReference>
<dbReference type="Gene3D" id="3.40.50.1220">
    <property type="entry name" value="TPP-binding domain"/>
    <property type="match status" value="1"/>
</dbReference>
<dbReference type="HAMAP" id="MF_01659">
    <property type="entry name" value="MenD"/>
    <property type="match status" value="1"/>
</dbReference>
<dbReference type="InterPro" id="IPR004433">
    <property type="entry name" value="MenaQ_synth_MenD"/>
</dbReference>
<dbReference type="InterPro" id="IPR032264">
    <property type="entry name" value="MenD_middle"/>
</dbReference>
<dbReference type="InterPro" id="IPR029061">
    <property type="entry name" value="THDP-binding"/>
</dbReference>
<dbReference type="InterPro" id="IPR012001">
    <property type="entry name" value="Thiamin_PyroP_enz_TPP-bd_dom"/>
</dbReference>
<dbReference type="InterPro" id="IPR011766">
    <property type="entry name" value="TPP_enzyme_TPP-bd"/>
</dbReference>
<dbReference type="NCBIfam" id="TIGR00173">
    <property type="entry name" value="menD"/>
    <property type="match status" value="1"/>
</dbReference>
<dbReference type="PANTHER" id="PTHR42916">
    <property type="entry name" value="2-SUCCINYL-5-ENOLPYRUVYL-6-HYDROXY-3-CYCLOHEXENE-1-CARBOXYLATE SYNTHASE"/>
    <property type="match status" value="1"/>
</dbReference>
<dbReference type="PANTHER" id="PTHR42916:SF1">
    <property type="entry name" value="PROTEIN PHYLLO, CHLOROPLASTIC"/>
    <property type="match status" value="1"/>
</dbReference>
<dbReference type="Pfam" id="PF02775">
    <property type="entry name" value="TPP_enzyme_C"/>
    <property type="match status" value="1"/>
</dbReference>
<dbReference type="Pfam" id="PF16582">
    <property type="entry name" value="TPP_enzyme_M_2"/>
    <property type="match status" value="1"/>
</dbReference>
<dbReference type="Pfam" id="PF02776">
    <property type="entry name" value="TPP_enzyme_N"/>
    <property type="match status" value="1"/>
</dbReference>
<dbReference type="PIRSF" id="PIRSF004983">
    <property type="entry name" value="MenD"/>
    <property type="match status" value="1"/>
</dbReference>
<dbReference type="SUPFAM" id="SSF52518">
    <property type="entry name" value="Thiamin diphosphate-binding fold (THDP-binding)"/>
    <property type="match status" value="2"/>
</dbReference>
<feature type="chain" id="PRO_0000341883" description="2-succinyl-5-enolpyruvyl-6-hydroxy-3-cyclohexene-1-carboxylate synthase">
    <location>
        <begin position="1"/>
        <end position="570"/>
    </location>
</feature>
<reference key="1">
    <citation type="submission" date="2007-03" db="EMBL/GenBank/DDBJ databases">
        <authorList>
            <person name="Heidelberg J."/>
        </authorList>
    </citation>
    <scope>NUCLEOTIDE SEQUENCE [LARGE SCALE GENOMIC DNA]</scope>
    <source>
        <strain>ATCC 39541 / Classical Ogawa 395 / O395</strain>
    </source>
</reference>
<reference key="2">
    <citation type="journal article" date="2008" name="PLoS ONE">
        <title>A recalibrated molecular clock and independent origins for the cholera pandemic clones.</title>
        <authorList>
            <person name="Feng L."/>
            <person name="Reeves P.R."/>
            <person name="Lan R."/>
            <person name="Ren Y."/>
            <person name="Gao C."/>
            <person name="Zhou Z."/>
            <person name="Ren Y."/>
            <person name="Cheng J."/>
            <person name="Wang W."/>
            <person name="Wang J."/>
            <person name="Qian W."/>
            <person name="Li D."/>
            <person name="Wang L."/>
        </authorList>
    </citation>
    <scope>NUCLEOTIDE SEQUENCE [LARGE SCALE GENOMIC DNA]</scope>
    <source>
        <strain>ATCC 39541 / Classical Ogawa 395 / O395</strain>
    </source>
</reference>
<protein>
    <recommendedName>
        <fullName evidence="1">2-succinyl-5-enolpyruvyl-6-hydroxy-3-cyclohexene-1-carboxylate synthase</fullName>
        <shortName evidence="1">SEPHCHC synthase</shortName>
        <ecNumber evidence="1">2.2.1.9</ecNumber>
    </recommendedName>
    <alternativeName>
        <fullName evidence="1">Menaquinone biosynthesis protein MenD</fullName>
    </alternativeName>
</protein>
<accession>A5F6T1</accession>
<accession>C3M227</accession>
<sequence>MNRDQALLNRLWSRVLLEELSRLGVTQVCVAPGSRSTPLTLEANANTAFTLHTHYDERGLGFMALGLAKASQQPVAVIVTSGTAVANLLPAIAESKLTGERLVVLTADRPLELVGCGANQAIVQSGIFSSHVTASLELPSPAIHHPLSWLLTSIDEVMARQALLGGSVHINCPFPEPLYSAGDEAIYQPYLQPVQRWREQARPYTQVHQGLVQSVPAAIDGLLTKGVVIVGSLSLQEAQAAKRFAKAMGWPLLCDPQSGISSQWAHFDLWLQHPKAREQLNQAQCVVQFGSRIVSKRLLQWLEAWCATGLGEYHYIAPHSARNNPWHAMQQQWVCEISHWVDAVLSKRLAGQHTQQGWADELTHYAQSVRQLAQLHFSSSSLSEVALALDLTERATQADLFLGNSLIVRLVDIFSALDGREVFSNRGASGIDGLVATASGVQRARQKPLLMLLGDTSLLYDLNSLALMRNPAQPTVIVVTNNDGGAIFDLLPVPSEQREALYQMPHGMDFAHAASQFGLAYCAAQTLEHYQTLVEEHFAHGAGTLLIEVKTPPQQASMHIKQLTSQLHAL</sequence>